<name>MU1_REOVD</name>
<keyword id="KW-0002">3D-structure</keyword>
<keyword id="KW-0053">Apoptosis</keyword>
<keyword id="KW-0167">Capsid protein</keyword>
<keyword id="KW-0325">Glycoprotein</keyword>
<keyword id="KW-1032">Host cell membrane</keyword>
<keyword id="KW-1038">Host endoplasmic reticulum</keyword>
<keyword id="KW-1043">Host membrane</keyword>
<keyword id="KW-1045">Host mitochondrion</keyword>
<keyword id="KW-0449">Lipoprotein</keyword>
<keyword id="KW-0472">Membrane</keyword>
<keyword id="KW-0519">Myristate</keyword>
<keyword id="KW-1152">Outer capsid protein</keyword>
<keyword id="KW-1162">Viral penetration into host cytoplasm</keyword>
<keyword id="KW-1173">Viral penetration via permeabilization of host membrane</keyword>
<keyword id="KW-0946">Virion</keyword>
<keyword id="KW-1160">Virus entry into host cell</keyword>
<dbReference type="EMBL" id="M19408">
    <property type="protein sequence ID" value="AAA47258.1"/>
    <property type="molecule type" value="Genomic_RNA"/>
</dbReference>
<dbReference type="EMBL" id="M20161">
    <property type="protein sequence ID" value="AAA63507.1"/>
    <property type="molecule type" value="Genomic_RNA"/>
</dbReference>
<dbReference type="EMBL" id="EF494439">
    <property type="protein sequence ID" value="ABP48917.1"/>
    <property type="molecule type" value="Genomic_RNA"/>
</dbReference>
<dbReference type="PIR" id="A28606">
    <property type="entry name" value="M2XR4D"/>
</dbReference>
<dbReference type="PIR" id="B28612">
    <property type="entry name" value="M2XR3D"/>
</dbReference>
<dbReference type="PDB" id="9CYT">
    <property type="method" value="EM"/>
    <property type="resolution" value="3.70 A"/>
    <property type="chains" value="A/B/D/E/F/H=1-708"/>
</dbReference>
<dbReference type="PDB" id="9CYY">
    <property type="method" value="EM"/>
    <property type="resolution" value="3.00 A"/>
    <property type="chains" value="A/B/D/E/F/H=1-708"/>
</dbReference>
<dbReference type="PDBsum" id="9CYT"/>
<dbReference type="PDBsum" id="9CYY"/>
<dbReference type="EMDB" id="EMD-13149"/>
<dbReference type="EMDB" id="EMD-13150"/>
<dbReference type="EMDB" id="EMD-46049"/>
<dbReference type="EMDB" id="EMD-46054"/>
<dbReference type="SMR" id="P11078"/>
<dbReference type="ELM" id="P11078"/>
<dbReference type="MEROPS" id="N07.001"/>
<dbReference type="GlyCosmos" id="P11078">
    <property type="glycosylation" value="8 sites, No reported glycans"/>
</dbReference>
<dbReference type="iPTMnet" id="P11078"/>
<dbReference type="Proteomes" id="UP000006373">
    <property type="component" value="Genome"/>
</dbReference>
<dbReference type="Proteomes" id="UP000165799">
    <property type="component" value="Genome"/>
</dbReference>
<dbReference type="GO" id="GO:0044165">
    <property type="term" value="C:host cell endoplasmic reticulum"/>
    <property type="evidence" value="ECO:0007669"/>
    <property type="project" value="UniProtKB-SubCell"/>
</dbReference>
<dbReference type="GO" id="GO:0033650">
    <property type="term" value="C:host cell mitochondrion"/>
    <property type="evidence" value="ECO:0007669"/>
    <property type="project" value="UniProtKB-SubCell"/>
</dbReference>
<dbReference type="GO" id="GO:0020002">
    <property type="term" value="C:host cell plasma membrane"/>
    <property type="evidence" value="ECO:0007669"/>
    <property type="project" value="UniProtKB-SubCell"/>
</dbReference>
<dbReference type="GO" id="GO:0016020">
    <property type="term" value="C:membrane"/>
    <property type="evidence" value="ECO:0007669"/>
    <property type="project" value="UniProtKB-KW"/>
</dbReference>
<dbReference type="GO" id="GO:0039624">
    <property type="term" value="C:viral outer capsid"/>
    <property type="evidence" value="ECO:0007669"/>
    <property type="project" value="UniProtKB-KW"/>
</dbReference>
<dbReference type="GO" id="GO:0046812">
    <property type="term" value="F:host cell surface binding"/>
    <property type="evidence" value="ECO:0007669"/>
    <property type="project" value="InterPro"/>
</dbReference>
<dbReference type="GO" id="GO:0140267">
    <property type="term" value="P:symbiont entry into host cell via permeabilization of host membrane"/>
    <property type="evidence" value="ECO:0007669"/>
    <property type="project" value="UniProtKB-KW"/>
</dbReference>
<dbReference type="Gene3D" id="2.60.120.420">
    <property type="entry name" value="Membrane penetration protein mu1, Chain B, domain 4"/>
    <property type="match status" value="1"/>
</dbReference>
<dbReference type="Gene3D" id="3.90.1370.10">
    <property type="entry name" value="Protein mu-1, chain B, domain 1"/>
    <property type="match status" value="1"/>
</dbReference>
<dbReference type="Gene3D" id="1.10.2040.10">
    <property type="entry name" value="Protein mu-1, chain B, domain 2"/>
    <property type="match status" value="1"/>
</dbReference>
<dbReference type="Gene3D" id="1.10.2050.10">
    <property type="entry name" value="Protein mu-1, chain B, domain 3"/>
    <property type="match status" value="1"/>
</dbReference>
<dbReference type="InterPro" id="IPR009113">
    <property type="entry name" value="Mu1/VP4"/>
</dbReference>
<dbReference type="InterPro" id="IPR036256">
    <property type="entry name" value="Mu1/VP4_sf"/>
</dbReference>
<dbReference type="InterPro" id="IPR015961">
    <property type="entry name" value="Mu1_membr_pen_domI"/>
</dbReference>
<dbReference type="InterPro" id="IPR015962">
    <property type="entry name" value="Mu1_membr_pen_domII"/>
</dbReference>
<dbReference type="InterPro" id="IPR044937">
    <property type="entry name" value="Mu1_membr_pen_domIII"/>
</dbReference>
<dbReference type="InterPro" id="IPR015960">
    <property type="entry name" value="Mu1_membr_pen_domIV"/>
</dbReference>
<dbReference type="Pfam" id="PF05993">
    <property type="entry name" value="Reovirus_M2"/>
    <property type="match status" value="1"/>
</dbReference>
<dbReference type="SUPFAM" id="SSF69908">
    <property type="entry name" value="Membrane penetration protein mu1"/>
    <property type="match status" value="1"/>
</dbReference>
<organismHost>
    <name type="scientific">Mammalia</name>
    <dbReference type="NCBI Taxonomy" id="40674"/>
</organismHost>
<accession>P11078</accession>
<accession>A4ZY24</accession>
<accession>P17701</accession>
<comment type="function">
    <text evidence="1">Major outer capsid protein involved in host cell membrane penetration. In the endocytic compartment, outer-capsid protein sigma-3 is removed by cathepsin proteases, which exposes the viral membrane-penetration protein mu-1. Both myristoylated peptides mu-1N and phi are released during infectious subvirion particles (ISVP) formation in the endosome. They associate with host membranes and mu-1N induces permeabilization and delivery of transcriptionally active viral particles into the host cell cytoplasm. Seems to induce apoptosis in the host cell (By similarity).</text>
</comment>
<comment type="function">
    <text evidence="4">The viral outer shell polypeptides, of which mu-1 is one, impose structural constraints that prevent elongation of nascent transcripts by the RNA-dependent RNA polymerase lambda-3.</text>
</comment>
<comment type="subunit">
    <text evidence="1">Heterohexamer of three sigma-3 and three Mu-1 proteins.</text>
</comment>
<comment type="subcellular location">
    <molecule>Outer capsid protein mu-1</molecule>
    <subcellularLocation>
        <location evidence="1">Virion</location>
    </subcellularLocation>
    <subcellularLocation>
        <location>Host cell membrane</location>
        <topology>Lipid-anchor</topology>
    </subcellularLocation>
    <subcellularLocation>
        <location evidence="1">Host endoplasmic reticulum</location>
    </subcellularLocation>
    <subcellularLocation>
        <location evidence="1">Host mitochondrion</location>
    </subcellularLocation>
    <text>Found in the outer capsid. Seems to associate with cell membranes. This association is enhanced by myristoylation.</text>
</comment>
<comment type="domain">
    <text evidence="1">The C-terminal region, phi, determines both targeting to intracellular membranes and induction of apoptosis.</text>
</comment>
<comment type="PTM">
    <text evidence="5 6">Cleaved during the endosomal proteolytic disassembly of the outer capsid. Mu-1 is proteolytically cleaved into mu-1N and mu-1C during the maturation step to generate the ISVP. Cleavage of mu-1 to mu-1C is dependent on myristoylation and binding to sigma-3 protein. Mu-1C is further cleaved into delta (59 kDa), and phi (13 kDa) segments during entry into the host cell cytoplasm.</text>
</comment>
<comment type="PTM">
    <text evidence="6">Mu-1 and mu-1N are N-terminally myristoylated. This acylation is essential for the membrane fusion activity.</text>
</comment>
<comment type="similarity">
    <text evidence="7">Belongs to the orthoreovirus mu-1 protein family.</text>
</comment>
<protein>
    <recommendedName>
        <fullName>Outer capsid protein mu-1</fullName>
        <shortName>Mu1</shortName>
    </recommendedName>
    <component>
        <recommendedName>
            <fullName>Outer capsid protein mu-1N</fullName>
        </recommendedName>
    </component>
    <component>
        <recommendedName>
            <fullName>Outer capsid protein mu-1C</fullName>
        </recommendedName>
    </component>
</protein>
<evidence type="ECO:0000250" key="1"/>
<evidence type="ECO:0000255" key="2"/>
<evidence type="ECO:0000256" key="3">
    <source>
        <dbReference type="SAM" id="MobiDB-lite"/>
    </source>
</evidence>
<evidence type="ECO:0000269" key="4">
    <source>
    </source>
</evidence>
<evidence type="ECO:0000269" key="5">
    <source>
    </source>
</evidence>
<evidence type="ECO:0000269" key="6">
    <source>
    </source>
</evidence>
<evidence type="ECO:0000305" key="7"/>
<feature type="initiator methionine" description="Removed; by host">
    <location>
        <position position="1"/>
    </location>
</feature>
<feature type="chain" id="PRO_0000040656" description="Outer capsid protein mu-1">
    <location>
        <begin position="2"/>
        <end position="708"/>
    </location>
</feature>
<feature type="chain" id="PRO_0000344978" description="Outer capsid protein mu-1N">
    <location>
        <begin position="2"/>
        <end position="42"/>
    </location>
</feature>
<feature type="chain" id="PRO_0000040658" description="Outer capsid protein mu-1C">
    <location>
        <begin position="43"/>
        <end position="708"/>
    </location>
</feature>
<feature type="region of interest" description="Disordered" evidence="3">
    <location>
        <begin position="675"/>
        <end position="708"/>
    </location>
</feature>
<feature type="site" description="Cleavage">
    <location>
        <begin position="42"/>
        <end position="43"/>
    </location>
</feature>
<feature type="lipid moiety-binding region" description="N-myristoyl glycine; by host" evidence="6">
    <location>
        <position position="2"/>
    </location>
</feature>
<feature type="glycosylation site" description="N-linked (GlcNAc...) asparagine; by host" evidence="2">
    <location>
        <position position="3"/>
    </location>
</feature>
<feature type="glycosylation site" description="N-linked (GlcNAc...) asparagine; by host" evidence="2">
    <location>
        <position position="12"/>
    </location>
</feature>
<feature type="glycosylation site" description="N-linked (GlcNAc...) asparagine; by host" evidence="2">
    <location>
        <position position="81"/>
    </location>
</feature>
<feature type="glycosylation site" description="N-linked (GlcNAc...) asparagine; by host" evidence="2">
    <location>
        <position position="110"/>
    </location>
</feature>
<feature type="glycosylation site" description="N-linked (GlcNAc...) asparagine; by host" evidence="2">
    <location>
        <position position="458"/>
    </location>
</feature>
<feature type="glycosylation site" description="N-linked (GlcNAc...) asparagine; by host" evidence="2">
    <location>
        <position position="482"/>
    </location>
</feature>
<feature type="glycosylation site" description="N-linked (GlcNAc...) asparagine; by host" evidence="2">
    <location>
        <position position="528"/>
    </location>
</feature>
<feature type="glycosylation site" description="N-linked (GlcNAc...) asparagine; by host" evidence="2">
    <location>
        <position position="659"/>
    </location>
</feature>
<feature type="mutagenesis site" description="Complete loss of myristoylation and binding to sigma-3 protein." evidence="6">
    <original>G</original>
    <variation>A</variation>
    <location>
        <position position="2"/>
    </location>
</feature>
<feature type="mutagenesis site" description="Complete loss of proteolytic cleavage." evidence="6">
    <original>N</original>
    <variation>T</variation>
    <location>
        <position position="42"/>
    </location>
</feature>
<feature type="sequence conflict" description="In Ref. 2; AAA63507." evidence="7" ref="2">
    <original>S</original>
    <variation>T</variation>
    <location>
        <position position="227"/>
    </location>
</feature>
<feature type="sequence conflict" description="In Ref. 1; AAA47258." evidence="7" ref="1">
    <original>AQ</original>
    <variation>RVM</variation>
    <location>
        <begin position="439"/>
        <end position="440"/>
    </location>
</feature>
<feature type="sequence conflict" description="In Ref. 1; AAA47258." evidence="7" ref="1">
    <original>N</original>
    <variation>K</variation>
    <location>
        <position position="587"/>
    </location>
</feature>
<feature type="sequence conflict" description="In Ref. 1; AAA47258." evidence="7" ref="1">
    <original>V</original>
    <variation>L</variation>
    <location>
        <position position="701"/>
    </location>
</feature>
<gene>
    <name type="primary">M2</name>
</gene>
<sequence length="708" mass="76271">MGNASSIVQTINVTGDGNVFKPSAETSSTAVPSLSLSPGMLNPGGVPWIAVGDETSVTSPGALRRMTSKDIPETAIINTDNSSGAVPSESALVPYIDEPLVVVTEHAITNFTKAEMALEFNREFLDKMRVLSVSPKYSDLLTYVDCYVGVSARQALNNFQKQVPVITPTRQTMYVDSIQAALKALEKWEIDLRVAQTLLPTNVPIGEVSCPMQSVVKLLDDQLPDDSLIRRYPKEAAVALAKRNGGIQWMDVSEGTVMNEAVNAVAASALAPSASAPPLEEKSKLTEQAMDLVTAAEPEIIASLAPVPAPVFAIPPKPADYNVRTLRIDEATWLRMIPKSMNTPFQIQVTDNTGTNWHLNLRGGTRVVNLDQIAPMRFVLDLGGKSYKETSWDPNGKKVGFIVFQSKIPFELWTAASQIGQATVVNYVQLYAEDSSFTAQSIIATTSLAYNYEPEQLNKTDPEMNYYLLATFIDSAAITPTNMTQPDVWDALLTMSPLSAGEVTVKGAVVSEVVPADLIGSYTPESLNASLPNDAARCMIDRASKIAEAIKIDDDAGPDEYSPNSVPIQGQLAISQLETGYGVRIFNPKGILSKIASRAMQAFIGDPSTIITQAAPVLSDKNNWIALAQGVKTSLRTKSLSAGVKTAVSKLSSSESIQNWTQGFLDKVSAHFPAPKPDCPTSGDSGESSNRRVKRDSYAGVVKRGYTR</sequence>
<reference key="1">
    <citation type="journal article" date="1988" name="Virology">
        <title>Molecular cloning and sequencing of the gene (M2) encoding the major virion structural protein (mu 1-mu 1C) of serotypes 1 and 3 of mammalian reovirus.</title>
        <authorList>
            <person name="Tarlow O."/>
            <person name="McCorquodale J.G."/>
            <person name="McCrae M.A."/>
        </authorList>
    </citation>
    <scope>NUCLEOTIDE SEQUENCE [GENOMIC RNA]</scope>
</reference>
<reference key="2">
    <citation type="journal article" date="1988" name="Virology">
        <title>Complete nucleotide sequence of the M2 gene segment of reovirus type 3 dearing and analysis of its protein product mu 1.</title>
        <authorList>
            <person name="Jayasuriya A.K."/>
            <person name="Nibert M.L."/>
            <person name="Fields B.N."/>
        </authorList>
    </citation>
    <scope>NUCLEOTIDE SEQUENCE [GENOMIC RNA]</scope>
</reference>
<reference key="3">
    <citation type="journal article" date="2007" name="Cell Host Microbe">
        <title>A plasmid-based reverse genetics system for animal double-stranded RNA viruses.</title>
        <authorList>
            <person name="Kobayashi T."/>
            <person name="Antar A.A."/>
            <person name="Boehme K.W."/>
            <person name="Danthi P."/>
            <person name="Eby E.A."/>
            <person name="Guglielmi K.M."/>
            <person name="Holm G.H."/>
            <person name="Johnson E.M."/>
            <person name="Maginnis M.S."/>
            <person name="Naik S."/>
            <person name="Skelton W.B."/>
            <person name="Wetzel J.D."/>
            <person name="Wilson G.J."/>
            <person name="Chappell J.D."/>
            <person name="Dermody T.S."/>
        </authorList>
    </citation>
    <scope>NUCLEOTIDE SEQUENCE [GENOMIC RNA]</scope>
    <source>
        <strain>Infectious clone</strain>
    </source>
</reference>
<reference key="4">
    <citation type="journal article" date="1992" name="J. Virol.">
        <title>Reovirus polypeptide sigma 3 and N-terminal myristoylation of polypeptide mu 1 are required for site-specific cleavage to mu 1C in transfected cells.</title>
        <authorList>
            <person name="Tillotson L."/>
            <person name="Shatkin A.J."/>
        </authorList>
    </citation>
    <scope>MYRISTOYLATION AT GLY-2</scope>
    <scope>MUTAGENESIS OF GLY-2 AND ASN-42</scope>
    <scope>PROTEOLYTIC PROCESSING</scope>
</reference>
<reference key="5">
    <citation type="journal article" date="1992" name="J. Virol.">
        <title>A carboxy-terminal fragment of protein mu 1/mu 1C is present in infectious subvirion particles of mammalian reoviruses and is proposed to have a role in penetration.</title>
        <authorList>
            <person name="Nibert M.L."/>
            <person name="Fields B.N."/>
        </authorList>
    </citation>
    <scope>PROTEOLYTIC PROCESSING</scope>
</reference>
<reference key="6">
    <citation type="journal article" date="2000" name="J. Biol. Chem.">
        <title>Transcriptional activities of reovirus RNA polymerase in recoated cores. Initiation and elongation are regulated by separate mechanisms.</title>
        <authorList>
            <person name="Farsetta D.L."/>
            <person name="Chandran K."/>
            <person name="Nibert M.L."/>
        </authorList>
    </citation>
    <scope>FUNCTION</scope>
</reference>
<organism>
    <name type="scientific">Reovirus type 3 (strain Dearing)</name>
    <name type="common">T3D</name>
    <name type="synonym">Mammalian orthoreovirus 3</name>
    <dbReference type="NCBI Taxonomy" id="10886"/>
    <lineage>
        <taxon>Viruses</taxon>
        <taxon>Riboviria</taxon>
        <taxon>Orthornavirae</taxon>
        <taxon>Duplornaviricota</taxon>
        <taxon>Resentoviricetes</taxon>
        <taxon>Reovirales</taxon>
        <taxon>Spinareoviridae</taxon>
        <taxon>Orthoreovirus</taxon>
        <taxon>Mammalian orthoreovirus</taxon>
    </lineage>
</organism>
<proteinExistence type="evidence at protein level"/>